<evidence type="ECO:0000255" key="1"/>
<evidence type="ECO:0000255" key="2">
    <source>
        <dbReference type="PROSITE-ProRule" id="PRU00159"/>
    </source>
</evidence>
<evidence type="ECO:0000255" key="3">
    <source>
        <dbReference type="PROSITE-ProRule" id="PRU10027"/>
    </source>
</evidence>
<evidence type="ECO:0000305" key="4"/>
<keyword id="KW-0067">ATP-binding</keyword>
<keyword id="KW-0325">Glycoprotein</keyword>
<keyword id="KW-0418">Kinase</keyword>
<keyword id="KW-0472">Membrane</keyword>
<keyword id="KW-0547">Nucleotide-binding</keyword>
<keyword id="KW-1185">Reference proteome</keyword>
<keyword id="KW-0723">Serine/threonine-protein kinase</keyword>
<keyword id="KW-0732">Signal</keyword>
<keyword id="KW-0808">Transferase</keyword>
<keyword id="KW-0812">Transmembrane</keyword>
<keyword id="KW-1133">Transmembrane helix</keyword>
<proteinExistence type="evidence at transcript level"/>
<organism>
    <name type="scientific">Arabidopsis thaliana</name>
    <name type="common">Mouse-ear cress</name>
    <dbReference type="NCBI Taxonomy" id="3702"/>
    <lineage>
        <taxon>Eukaryota</taxon>
        <taxon>Viridiplantae</taxon>
        <taxon>Streptophyta</taxon>
        <taxon>Embryophyta</taxon>
        <taxon>Tracheophyta</taxon>
        <taxon>Spermatophyta</taxon>
        <taxon>Magnoliopsida</taxon>
        <taxon>eudicotyledons</taxon>
        <taxon>Gunneridae</taxon>
        <taxon>Pentapetalae</taxon>
        <taxon>rosids</taxon>
        <taxon>malvids</taxon>
        <taxon>Brassicales</taxon>
        <taxon>Brassicaceae</taxon>
        <taxon>Camelineae</taxon>
        <taxon>Arabidopsis</taxon>
    </lineage>
</organism>
<accession>Q8GYF5</accession>
<accession>F4K248</accession>
<accession>Q9FL01</accession>
<feature type="signal peptide" evidence="1">
    <location>
        <begin position="1"/>
        <end position="21"/>
    </location>
</feature>
<feature type="chain" id="PRO_0000253322" description="Wall-associated receptor kinase-like 21">
    <location>
        <begin position="22"/>
        <end position="622"/>
    </location>
</feature>
<feature type="topological domain" description="Extracellular" evidence="1">
    <location>
        <begin position="22"/>
        <end position="247"/>
    </location>
</feature>
<feature type="transmembrane region" description="Helical" evidence="1">
    <location>
        <begin position="248"/>
        <end position="268"/>
    </location>
</feature>
<feature type="topological domain" description="Cytoplasmic" evidence="1">
    <location>
        <begin position="269"/>
        <end position="622"/>
    </location>
</feature>
<feature type="domain" description="Protein kinase" evidence="2">
    <location>
        <begin position="314"/>
        <end position="594"/>
    </location>
</feature>
<feature type="active site" description="Proton acceptor" evidence="2 3">
    <location>
        <position position="439"/>
    </location>
</feature>
<feature type="binding site" evidence="2">
    <location>
        <begin position="320"/>
        <end position="328"/>
    </location>
    <ligand>
        <name>ATP</name>
        <dbReference type="ChEBI" id="CHEBI:30616"/>
    </ligand>
</feature>
<feature type="binding site" evidence="2">
    <location>
        <position position="342"/>
    </location>
    <ligand>
        <name>ATP</name>
        <dbReference type="ChEBI" id="CHEBI:30616"/>
    </ligand>
</feature>
<feature type="glycosylation site" description="N-linked (GlcNAc...) asparagine" evidence="1">
    <location>
        <position position="50"/>
    </location>
</feature>
<feature type="glycosylation site" description="N-linked (GlcNAc...) asparagine" evidence="1">
    <location>
        <position position="114"/>
    </location>
</feature>
<feature type="glycosylation site" description="N-linked (GlcNAc...) asparagine" evidence="1">
    <location>
        <position position="131"/>
    </location>
</feature>
<feature type="glycosylation site" description="N-linked (GlcNAc...) asparagine" evidence="1">
    <location>
        <position position="160"/>
    </location>
</feature>
<feature type="glycosylation site" description="N-linked (GlcNAc...) asparagine" evidence="1">
    <location>
        <position position="195"/>
    </location>
</feature>
<feature type="sequence conflict" description="In Ref. 3; BAC42322." evidence="4" ref="3">
    <original>ETPQ</original>
    <variation>MTRE</variation>
    <location>
        <begin position="3"/>
        <end position="6"/>
    </location>
</feature>
<feature type="sequence conflict" description="In Ref. 3; BAC42322." evidence="4" ref="3">
    <original>G</original>
    <variation>E</variation>
    <location>
        <position position="295"/>
    </location>
</feature>
<dbReference type="EC" id="2.7.11.-"/>
<dbReference type="EMBL" id="AB010700">
    <property type="protein sequence ID" value="BAB08621.1"/>
    <property type="molecule type" value="Genomic_DNA"/>
</dbReference>
<dbReference type="EMBL" id="CP002688">
    <property type="protein sequence ID" value="AED98263.1"/>
    <property type="molecule type" value="Genomic_DNA"/>
</dbReference>
<dbReference type="EMBL" id="AK117669">
    <property type="protein sequence ID" value="BAC42322.1"/>
    <property type="molecule type" value="mRNA"/>
</dbReference>
<dbReference type="RefSeq" id="NP_201480.3">
    <property type="nucleotide sequence ID" value="NM_126077.5"/>
</dbReference>
<dbReference type="SMR" id="Q8GYF5"/>
<dbReference type="BioGRID" id="22054">
    <property type="interactions" value="7"/>
</dbReference>
<dbReference type="FunCoup" id="Q8GYF5">
    <property type="interactions" value="241"/>
</dbReference>
<dbReference type="IntAct" id="Q8GYF5">
    <property type="interactions" value="8"/>
</dbReference>
<dbReference type="STRING" id="3702.Q8GYF5"/>
<dbReference type="GlyCosmos" id="Q8GYF5">
    <property type="glycosylation" value="5 sites, No reported glycans"/>
</dbReference>
<dbReference type="GlyGen" id="Q8GYF5">
    <property type="glycosylation" value="6 sites"/>
</dbReference>
<dbReference type="iPTMnet" id="Q8GYF5"/>
<dbReference type="PaxDb" id="3702-AT5G66790.1"/>
<dbReference type="ProteomicsDB" id="242760"/>
<dbReference type="EnsemblPlants" id="AT5G66790.1">
    <property type="protein sequence ID" value="AT5G66790.1"/>
    <property type="gene ID" value="AT5G66790"/>
</dbReference>
<dbReference type="GeneID" id="836812"/>
<dbReference type="Gramene" id="AT5G66790.1">
    <property type="protein sequence ID" value="AT5G66790.1"/>
    <property type="gene ID" value="AT5G66790"/>
</dbReference>
<dbReference type="KEGG" id="ath:AT5G66790"/>
<dbReference type="Araport" id="AT5G66790"/>
<dbReference type="TAIR" id="AT5G66790"/>
<dbReference type="eggNOG" id="KOG1187">
    <property type="taxonomic scope" value="Eukaryota"/>
</dbReference>
<dbReference type="HOGENOM" id="CLU_000288_43_5_1"/>
<dbReference type="InParanoid" id="Q8GYF5"/>
<dbReference type="OMA" id="IRFNCSE"/>
<dbReference type="PRO" id="PR:Q8GYF5"/>
<dbReference type="Proteomes" id="UP000006548">
    <property type="component" value="Chromosome 5"/>
</dbReference>
<dbReference type="ExpressionAtlas" id="Q8GYF5">
    <property type="expression patterns" value="baseline and differential"/>
</dbReference>
<dbReference type="GO" id="GO:0016020">
    <property type="term" value="C:membrane"/>
    <property type="evidence" value="ECO:0007669"/>
    <property type="project" value="UniProtKB-SubCell"/>
</dbReference>
<dbReference type="GO" id="GO:0005524">
    <property type="term" value="F:ATP binding"/>
    <property type="evidence" value="ECO:0007669"/>
    <property type="project" value="UniProtKB-KW"/>
</dbReference>
<dbReference type="GO" id="GO:0106310">
    <property type="term" value="F:protein serine kinase activity"/>
    <property type="evidence" value="ECO:0007669"/>
    <property type="project" value="RHEA"/>
</dbReference>
<dbReference type="GO" id="GO:0004674">
    <property type="term" value="F:protein serine/threonine kinase activity"/>
    <property type="evidence" value="ECO:0007669"/>
    <property type="project" value="UniProtKB-KW"/>
</dbReference>
<dbReference type="CDD" id="cd14066">
    <property type="entry name" value="STKc_IRAK"/>
    <property type="match status" value="1"/>
</dbReference>
<dbReference type="FunFam" id="3.30.200.20:FF:000481">
    <property type="entry name" value="Wall-associated receptor kinase-like 14"/>
    <property type="match status" value="1"/>
</dbReference>
<dbReference type="FunFam" id="1.10.510.10:FF:000161">
    <property type="entry name" value="Wall-associated receptor kinase-like 20"/>
    <property type="match status" value="1"/>
</dbReference>
<dbReference type="Gene3D" id="3.30.200.20">
    <property type="entry name" value="Phosphorylase Kinase, domain 1"/>
    <property type="match status" value="1"/>
</dbReference>
<dbReference type="Gene3D" id="1.10.510.10">
    <property type="entry name" value="Transferase(Phosphotransferase) domain 1"/>
    <property type="match status" value="1"/>
</dbReference>
<dbReference type="InterPro" id="IPR011009">
    <property type="entry name" value="Kinase-like_dom_sf"/>
</dbReference>
<dbReference type="InterPro" id="IPR000719">
    <property type="entry name" value="Prot_kinase_dom"/>
</dbReference>
<dbReference type="InterPro" id="IPR017441">
    <property type="entry name" value="Protein_kinase_ATP_BS"/>
</dbReference>
<dbReference type="InterPro" id="IPR001245">
    <property type="entry name" value="Ser-Thr/Tyr_kinase_cat_dom"/>
</dbReference>
<dbReference type="InterPro" id="IPR008271">
    <property type="entry name" value="Ser/Thr_kinase_AS"/>
</dbReference>
<dbReference type="PANTHER" id="PTHR46008">
    <property type="entry name" value="LEAF RUST 10 DISEASE-RESISTANCE LOCUS RECEPTOR-LIKE PROTEIN KINASE-LIKE 1.4"/>
    <property type="match status" value="1"/>
</dbReference>
<dbReference type="PANTHER" id="PTHR46008:SF62">
    <property type="entry name" value="PROTEIN KINASE DOMAIN-CONTAINING PROTEIN"/>
    <property type="match status" value="1"/>
</dbReference>
<dbReference type="Pfam" id="PF07714">
    <property type="entry name" value="PK_Tyr_Ser-Thr"/>
    <property type="match status" value="1"/>
</dbReference>
<dbReference type="SMART" id="SM00220">
    <property type="entry name" value="S_TKc"/>
    <property type="match status" value="1"/>
</dbReference>
<dbReference type="SUPFAM" id="SSF56112">
    <property type="entry name" value="Protein kinase-like (PK-like)"/>
    <property type="match status" value="1"/>
</dbReference>
<dbReference type="PROSITE" id="PS00107">
    <property type="entry name" value="PROTEIN_KINASE_ATP"/>
    <property type="match status" value="1"/>
</dbReference>
<dbReference type="PROSITE" id="PS50011">
    <property type="entry name" value="PROTEIN_KINASE_DOM"/>
    <property type="match status" value="1"/>
</dbReference>
<dbReference type="PROSITE" id="PS00108">
    <property type="entry name" value="PROTEIN_KINASE_ST"/>
    <property type="match status" value="1"/>
</dbReference>
<name>WAKLR_ARATH</name>
<reference key="1">
    <citation type="journal article" date="1998" name="DNA Res.">
        <title>Structural analysis of Arabidopsis thaliana chromosome 5. V. Sequence features of the regions of 1,381,565 bp covered by twenty one physically assigned P1 and TAC clones.</title>
        <authorList>
            <person name="Kaneko T."/>
            <person name="Kotani H."/>
            <person name="Nakamura Y."/>
            <person name="Sato S."/>
            <person name="Asamizu E."/>
            <person name="Miyajima N."/>
            <person name="Tabata S."/>
        </authorList>
    </citation>
    <scope>NUCLEOTIDE SEQUENCE [LARGE SCALE GENOMIC DNA]</scope>
    <source>
        <strain>cv. Columbia</strain>
    </source>
</reference>
<reference key="2">
    <citation type="journal article" date="2017" name="Plant J.">
        <title>Araport11: a complete reannotation of the Arabidopsis thaliana reference genome.</title>
        <authorList>
            <person name="Cheng C.Y."/>
            <person name="Krishnakumar V."/>
            <person name="Chan A.P."/>
            <person name="Thibaud-Nissen F."/>
            <person name="Schobel S."/>
            <person name="Town C.D."/>
        </authorList>
    </citation>
    <scope>GENOME REANNOTATION</scope>
    <source>
        <strain>cv. Columbia</strain>
    </source>
</reference>
<reference key="3">
    <citation type="journal article" date="2002" name="Science">
        <title>Functional annotation of a full-length Arabidopsis cDNA collection.</title>
        <authorList>
            <person name="Seki M."/>
            <person name="Narusaka M."/>
            <person name="Kamiya A."/>
            <person name="Ishida J."/>
            <person name="Satou M."/>
            <person name="Sakurai T."/>
            <person name="Nakajima M."/>
            <person name="Enju A."/>
            <person name="Akiyama K."/>
            <person name="Oono Y."/>
            <person name="Muramatsu M."/>
            <person name="Hayashizaki Y."/>
            <person name="Kawai J."/>
            <person name="Carninci P."/>
            <person name="Itoh M."/>
            <person name="Ishii Y."/>
            <person name="Arakawa T."/>
            <person name="Shibata K."/>
            <person name="Shinagawa A."/>
            <person name="Shinozaki K."/>
        </authorList>
    </citation>
    <scope>NUCLEOTIDE SEQUENCE [LARGE SCALE MRNA] OF 3-622</scope>
    <source>
        <strain>cv. Columbia</strain>
    </source>
</reference>
<reference key="4">
    <citation type="journal article" date="2002" name="Plant Physiol.">
        <title>The cell wall-associated kinase (WAK) and WAK-like kinase gene family.</title>
        <authorList>
            <person name="Verica J.A."/>
            <person name="He Z.-H."/>
        </authorList>
    </citation>
    <scope>GENE FAMILY ORGANIZATION</scope>
</reference>
<sequence>MAETPQPYLIFVFFVFTLTVATQTTGSVKCKTSLLRYPFGFSDGYPIRFNCSEITGEAVIGEFAVQEVTNSNIYVEIPPVCKRNIRKIEQLFRENLAPSKLQNIILVQGCKKQNKSSNCLIRNKFVENRLNLSKCKSPVSCLDGATTTTADVMSLGDVVNGSGCKYWFSSISQSQVSVNLGRLKLDWWLKGSCSNTTCSENADCAKVKLDDGGLGHRCTCREGFSGKAFTVPGGCHRLVYKRKGLHKLVVLGTAGILVGVLVIVVLIATYFFRNKQSASSERASIANRLLCELAGNSSVPFYTYKEIEKATDSFSDKNMLGTGAYGTVYAGEFPNSSCVAIKRLKHKDTTSIDQVVNEIKLLSSVSHPNLVRLLGCCFADGEPFLVYEFMPNGTLYQHLQHERGQPPLSWQLRLAIACQTANAIAHLHSSVNPPIYHRDIKSSNILLDHEFNSKISDFGLSRLGMSTDFEASHISTAPQGTPGYLDPQYHQDFQLSDKSDVYSFGVVLVEIISGFKVIDFTRPYSEVNLASLAVDRIGRGRVVDIIDPCLNKEINPKMFASIHNLAELAFRCLSFHRNMRPTMVEITEDLHRIKLMHYGTESGKFKNRSEIDMKRQQSFPRE</sequence>
<gene>
    <name type="primary">WAKL21</name>
    <name type="ordered locus">At5g66790</name>
    <name type="ORF">MUD21_3</name>
</gene>
<protein>
    <recommendedName>
        <fullName>Wall-associated receptor kinase-like 21</fullName>
        <ecNumber>2.7.11.-</ecNumber>
    </recommendedName>
</protein>
<comment type="function">
    <text>Serine/threonine-protein kinase that may function as a signaling receptor of extracellular matrix component.</text>
</comment>
<comment type="catalytic activity">
    <reaction>
        <text>L-seryl-[protein] + ATP = O-phospho-L-seryl-[protein] + ADP + H(+)</text>
        <dbReference type="Rhea" id="RHEA:17989"/>
        <dbReference type="Rhea" id="RHEA-COMP:9863"/>
        <dbReference type="Rhea" id="RHEA-COMP:11604"/>
        <dbReference type="ChEBI" id="CHEBI:15378"/>
        <dbReference type="ChEBI" id="CHEBI:29999"/>
        <dbReference type="ChEBI" id="CHEBI:30616"/>
        <dbReference type="ChEBI" id="CHEBI:83421"/>
        <dbReference type="ChEBI" id="CHEBI:456216"/>
    </reaction>
</comment>
<comment type="catalytic activity">
    <reaction>
        <text>L-threonyl-[protein] + ATP = O-phospho-L-threonyl-[protein] + ADP + H(+)</text>
        <dbReference type="Rhea" id="RHEA:46608"/>
        <dbReference type="Rhea" id="RHEA-COMP:11060"/>
        <dbReference type="Rhea" id="RHEA-COMP:11605"/>
        <dbReference type="ChEBI" id="CHEBI:15378"/>
        <dbReference type="ChEBI" id="CHEBI:30013"/>
        <dbReference type="ChEBI" id="CHEBI:30616"/>
        <dbReference type="ChEBI" id="CHEBI:61977"/>
        <dbReference type="ChEBI" id="CHEBI:456216"/>
    </reaction>
</comment>
<comment type="subcellular location">
    <subcellularLocation>
        <location evidence="4">Membrane</location>
        <topology evidence="4">Single-pass type I membrane protein</topology>
    </subcellularLocation>
</comment>
<comment type="similarity">
    <text evidence="2">Belongs to the protein kinase superfamily. Ser/Thr protein kinase family.</text>
</comment>
<comment type="caution">
    <text evidence="4">Lacks the calcium-binding EGF-like domain which is a conserved feature of the wall-associated receptor kinase family.</text>
</comment>